<feature type="chain" id="PRO_0000238993" description="Capsid protein">
    <location>
        <begin position="1"/>
        <end position="300"/>
    </location>
</feature>
<feature type="chain" id="PRO_0000238994" description="Spike glycoprotein E2">
    <location>
        <begin position="301"/>
        <end position="582"/>
    </location>
</feature>
<feature type="chain" id="PRO_0000238995" description="Spike glycoprotein E1">
    <location>
        <begin position="583"/>
        <end position="1063"/>
    </location>
</feature>
<feature type="topological domain" description="Extracellular" evidence="4">
    <location>
        <begin position="301"/>
        <end position="534"/>
    </location>
</feature>
<feature type="transmembrane region" description="Helical; Note=Golgi retention signal" evidence="3">
    <location>
        <begin position="535"/>
        <end position="555"/>
    </location>
</feature>
<feature type="topological domain" description="Cytoplasmic" evidence="4">
    <location>
        <begin position="556"/>
        <end position="582"/>
    </location>
</feature>
<feature type="topological domain" description="Extracellular" evidence="4">
    <location>
        <begin position="583"/>
        <end position="1028"/>
    </location>
</feature>
<feature type="transmembrane region" description="Helical; Note=Endoplasmic reticulum retention signal" evidence="3">
    <location>
        <begin position="1029"/>
        <end position="1049"/>
    </location>
</feature>
<feature type="topological domain" description="Extracellular" evidence="4">
    <location>
        <begin position="1050"/>
        <end position="1063"/>
    </location>
</feature>
<feature type="region of interest" description="Disordered" evidence="5">
    <location>
        <begin position="1"/>
        <end position="131"/>
    </location>
</feature>
<feature type="region of interest" description="Human C1QBP/SF2P32-binding" evidence="3">
    <location>
        <begin position="30"/>
        <end position="69"/>
    </location>
</feature>
<feature type="region of interest" description="Functions as E2 signal peptide" evidence="3">
    <location>
        <begin position="279"/>
        <end position="300"/>
    </location>
</feature>
<feature type="region of interest" description="Disordered" evidence="5">
    <location>
        <begin position="305"/>
        <end position="347"/>
    </location>
</feature>
<feature type="region of interest" description="Functions as E1 signal peptide" evidence="3">
    <location>
        <begin position="563"/>
        <end position="582"/>
    </location>
</feature>
<feature type="compositionally biased region" description="Basic residues" evidence="5">
    <location>
        <begin position="59"/>
        <end position="69"/>
    </location>
</feature>
<feature type="compositionally biased region" description="Pro residues" evidence="5">
    <location>
        <begin position="93"/>
        <end position="107"/>
    </location>
</feature>
<feature type="binding site" evidence="3">
    <location>
        <position position="670"/>
    </location>
    <ligand>
        <name>Ca(2+)</name>
        <dbReference type="ChEBI" id="CHEBI:29108"/>
    </ligand>
</feature>
<feature type="binding site" evidence="3">
    <location>
        <position position="671"/>
    </location>
    <ligand>
        <name>Ca(2+)</name>
        <dbReference type="ChEBI" id="CHEBI:29108"/>
    </ligand>
</feature>
<feature type="binding site" evidence="3">
    <location>
        <position position="718"/>
    </location>
    <ligand>
        <name>Ca(2+)</name>
        <dbReference type="ChEBI" id="CHEBI:29108"/>
    </ligand>
</feature>
<feature type="binding site" evidence="3">
    <location>
        <position position="719"/>
    </location>
    <ligand>
        <name>Ca(2+)</name>
        <dbReference type="ChEBI" id="CHEBI:29108"/>
    </ligand>
</feature>
<feature type="site" description="Cleavage; by host signal peptidase" evidence="4">
    <location>
        <begin position="300"/>
        <end position="301"/>
    </location>
</feature>
<feature type="site" description="Cleavage; by host signal peptidase" evidence="4">
    <location>
        <begin position="582"/>
        <end position="583"/>
    </location>
</feature>
<feature type="modified residue" description="Phosphoserine; by host" evidence="3">
    <location>
        <position position="46"/>
    </location>
</feature>
<feature type="glycosylation site" description="N-linked (GlcNAc...) asparagine; by host" evidence="4">
    <location>
        <position position="353"/>
    </location>
</feature>
<feature type="glycosylation site" description="N-linked (GlcNAc...) asparagine; by host" evidence="4">
    <location>
        <position position="371"/>
    </location>
</feature>
<feature type="glycosylation site" description="N-linked (GlcNAc...) asparagine; by host" evidence="4">
    <location>
        <position position="410"/>
    </location>
</feature>
<feature type="glycosylation site" description="N-linked (GlcNAc...) asparagine; by host" evidence="4">
    <location>
        <position position="429"/>
    </location>
</feature>
<feature type="glycosylation site" description="N-linked (GlcNAc...) asparagine; by host" evidence="3">
    <location>
        <position position="658"/>
    </location>
</feature>
<feature type="glycosylation site" description="N-linked (GlcNAc...) asparagine; by host" evidence="3">
    <location>
        <position position="759"/>
    </location>
</feature>
<feature type="glycosylation site" description="N-linked (GlcNAc...) asparagine; by host" evidence="3">
    <location>
        <position position="791"/>
    </location>
</feature>
<feature type="glycosylation site" description="O-linked (GalNAc...) threonine; by host" evidence="3">
    <location>
        <position position="1011"/>
    </location>
</feature>
<feature type="glycosylation site" description="O-linked (GalNAc...) threonine; by host" evidence="3">
    <location>
        <position position="1012"/>
    </location>
</feature>
<feature type="disulfide bond" evidence="3">
    <location>
        <begin position="153"/>
        <end position="197"/>
    </location>
</feature>
<feature type="disulfide bond" evidence="2">
    <location>
        <begin position="590"/>
        <end position="595"/>
    </location>
</feature>
<feature type="disulfide bond" evidence="2">
    <location>
        <begin position="619"/>
        <end position="824"/>
    </location>
</feature>
<feature type="disulfide bond" evidence="2">
    <location>
        <begin position="641"/>
        <end position="653"/>
    </location>
</feature>
<feature type="disulfide bond" evidence="2">
    <location>
        <begin position="699"/>
        <end position="712"/>
    </location>
</feature>
<feature type="disulfide bond" evidence="2">
    <location>
        <begin position="758"/>
        <end position="767"/>
    </location>
</feature>
<feature type="disulfide bond" evidence="2">
    <location>
        <begin position="807"/>
        <end position="817"/>
    </location>
</feature>
<feature type="disulfide bond" evidence="2">
    <location>
        <begin position="931"/>
        <end position="934"/>
    </location>
</feature>
<feature type="disulfide bond" evidence="2">
    <location>
        <begin position="950"/>
        <end position="983"/>
    </location>
</feature>
<feature type="sequence variant" description="In strain: Isolate Ulrike.">
    <original>C</original>
    <variation>W</variation>
    <location>
        <position position="362"/>
    </location>
</feature>
<feature type="sequence variant" description="In strain: Isolate Ulrike.">
    <original>T</original>
    <variation>A</variation>
    <location>
        <position position="599"/>
    </location>
</feature>
<feature type="sequence variant" description="In strain: Isolate Ulrike.">
    <original>G</original>
    <variation>D</variation>
    <location>
        <position position="794"/>
    </location>
</feature>
<evidence type="ECO:0000250" key="1"/>
<evidence type="ECO:0000250" key="2">
    <source>
        <dbReference type="UniProtKB" id="P07566"/>
    </source>
</evidence>
<evidence type="ECO:0000250" key="3">
    <source>
        <dbReference type="UniProtKB" id="P08563"/>
    </source>
</evidence>
<evidence type="ECO:0000255" key="4"/>
<evidence type="ECO:0000256" key="5">
    <source>
        <dbReference type="SAM" id="MobiDB-lite"/>
    </source>
</evidence>
<protein>
    <recommendedName>
        <fullName>Structural polyprotein</fullName>
    </recommendedName>
    <alternativeName>
        <fullName>p110</fullName>
    </alternativeName>
    <component>
        <recommendedName>
            <fullName>Capsid protein</fullName>
        </recommendedName>
        <alternativeName>
            <fullName>Coat protein</fullName>
            <shortName>C</shortName>
        </alternativeName>
    </component>
    <component>
        <recommendedName>
            <fullName>Spike glycoprotein E2</fullName>
        </recommendedName>
        <alternativeName>
            <fullName>E2 envelope glycoprotein</fullName>
        </alternativeName>
    </component>
    <component>
        <recommendedName>
            <fullName>Spike glycoprotein E1</fullName>
        </recommendedName>
        <alternativeName>
            <fullName>E1 envelope glycoprotein</fullName>
        </alternativeName>
    </component>
</protein>
<proteinExistence type="inferred from homology"/>
<organism>
    <name type="scientific">Rubella virus (strain RN-UK86)</name>
    <name type="common">RUBV</name>
    <dbReference type="NCBI Taxonomy" id="376267"/>
    <lineage>
        <taxon>Viruses</taxon>
        <taxon>Riboviria</taxon>
        <taxon>Orthornavirae</taxon>
        <taxon>Kitrinoviricota</taxon>
        <taxon>Alsuviricetes</taxon>
        <taxon>Hepelivirales</taxon>
        <taxon>Matonaviridae</taxon>
        <taxon>Rubivirus</taxon>
        <taxon>Rubivirus rubellae</taxon>
    </lineage>
</organism>
<reference key="1">
    <citation type="journal article" date="2003" name="Virus Res.">
        <title>Phylogenetic analysis of rubella virus including new genotype I isolates.</title>
        <authorList>
            <person name="Hofmann J."/>
            <person name="Renz M."/>
            <person name="Meyer S."/>
            <person name="von Haeseler A."/>
            <person name="Liebert U.G."/>
        </authorList>
    </citation>
    <scope>NUCLEOTIDE SEQUENCE [GENOMIC RNA]</scope>
    <source>
        <strain>Isolate Surkova</strain>
        <strain>Isolate Ulrike</strain>
    </source>
</reference>
<accession>Q8VA10</accession>
<accession>Q8VA12</accession>
<dbReference type="EMBL" id="AF435866">
    <property type="protein sequence ID" value="AAL31568.1"/>
    <property type="molecule type" value="Genomic_RNA"/>
</dbReference>
<dbReference type="EMBL" id="AF435865">
    <property type="protein sequence ID" value="AAL31566.1"/>
    <property type="molecule type" value="Genomic_RNA"/>
</dbReference>
<dbReference type="SMR" id="Q8VA10"/>
<dbReference type="IntAct" id="Q8VA10">
    <property type="interactions" value="2"/>
</dbReference>
<dbReference type="Proteomes" id="UP000007186">
    <property type="component" value="Genome"/>
</dbReference>
<dbReference type="Proteomes" id="UP000008993">
    <property type="component" value="Genome"/>
</dbReference>
<dbReference type="GO" id="GO:0044178">
    <property type="term" value="C:host cell Golgi membrane"/>
    <property type="evidence" value="ECO:0007669"/>
    <property type="project" value="UniProtKB-SubCell"/>
</dbReference>
<dbReference type="GO" id="GO:0033650">
    <property type="term" value="C:host cell mitochondrion"/>
    <property type="evidence" value="ECO:0007669"/>
    <property type="project" value="UniProtKB-SubCell"/>
</dbReference>
<dbReference type="GO" id="GO:0016020">
    <property type="term" value="C:membrane"/>
    <property type="evidence" value="ECO:0007669"/>
    <property type="project" value="UniProtKB-KW"/>
</dbReference>
<dbReference type="GO" id="GO:0039619">
    <property type="term" value="C:T=4 icosahedral viral capsid"/>
    <property type="evidence" value="ECO:0007669"/>
    <property type="project" value="UniProtKB-KW"/>
</dbReference>
<dbReference type="GO" id="GO:0019031">
    <property type="term" value="C:viral envelope"/>
    <property type="evidence" value="ECO:0007669"/>
    <property type="project" value="UniProtKB-KW"/>
</dbReference>
<dbReference type="GO" id="GO:0019013">
    <property type="term" value="C:viral nucleocapsid"/>
    <property type="evidence" value="ECO:0007669"/>
    <property type="project" value="InterPro"/>
</dbReference>
<dbReference type="GO" id="GO:0055036">
    <property type="term" value="C:virion membrane"/>
    <property type="evidence" value="ECO:0007669"/>
    <property type="project" value="UniProtKB-SubCell"/>
</dbReference>
<dbReference type="GO" id="GO:0046872">
    <property type="term" value="F:metal ion binding"/>
    <property type="evidence" value="ECO:0007669"/>
    <property type="project" value="UniProtKB-KW"/>
</dbReference>
<dbReference type="GO" id="GO:0003723">
    <property type="term" value="F:RNA binding"/>
    <property type="evidence" value="ECO:0007669"/>
    <property type="project" value="UniProtKB-KW"/>
</dbReference>
<dbReference type="GO" id="GO:0075512">
    <property type="term" value="P:clathrin-dependent endocytosis of virus by host cell"/>
    <property type="evidence" value="ECO:0007669"/>
    <property type="project" value="UniProtKB-KW"/>
</dbReference>
<dbReference type="GO" id="GO:0039654">
    <property type="term" value="P:fusion of virus membrane with host endosome membrane"/>
    <property type="evidence" value="ECO:0007669"/>
    <property type="project" value="UniProtKB-KW"/>
</dbReference>
<dbReference type="GO" id="GO:0019062">
    <property type="term" value="P:virion attachment to host cell"/>
    <property type="evidence" value="ECO:0007669"/>
    <property type="project" value="UniProtKB-KW"/>
</dbReference>
<dbReference type="Gene3D" id="2.60.98.30">
    <property type="entry name" value="Rubella membrane glycoprotein E1, domain 1"/>
    <property type="match status" value="1"/>
</dbReference>
<dbReference type="Gene3D" id="3.30.67.20">
    <property type="entry name" value="Rubella membrane glycoprotein E1, domain 2"/>
    <property type="match status" value="2"/>
</dbReference>
<dbReference type="Gene3D" id="2.60.40.2650">
    <property type="entry name" value="Rubella membrane glycoprotein E1, domain 3"/>
    <property type="match status" value="1"/>
</dbReference>
<dbReference type="Gene3D" id="3.10.50.50">
    <property type="entry name" value="Rubella virus capsid protein"/>
    <property type="match status" value="1"/>
</dbReference>
<dbReference type="InterPro" id="IPR008819">
    <property type="entry name" value="Rubella_Capsid"/>
</dbReference>
<dbReference type="InterPro" id="IPR043106">
    <property type="entry name" value="Rubella_Capsid_sf"/>
</dbReference>
<dbReference type="InterPro" id="IPR008820">
    <property type="entry name" value="Rubella_E1"/>
</dbReference>
<dbReference type="InterPro" id="IPR042500">
    <property type="entry name" value="Rubella_E1_1"/>
</dbReference>
<dbReference type="InterPro" id="IPR042498">
    <property type="entry name" value="Rubella_E1_2"/>
</dbReference>
<dbReference type="InterPro" id="IPR042499">
    <property type="entry name" value="Rubella_E1_3"/>
</dbReference>
<dbReference type="InterPro" id="IPR008821">
    <property type="entry name" value="Rubella_E2"/>
</dbReference>
<dbReference type="Pfam" id="PF05750">
    <property type="entry name" value="Rubella_Capsid"/>
    <property type="match status" value="1"/>
</dbReference>
<dbReference type="Pfam" id="PF05748">
    <property type="entry name" value="Rubella_E1"/>
    <property type="match status" value="1"/>
</dbReference>
<dbReference type="Pfam" id="PF05749">
    <property type="entry name" value="Rubella_E2"/>
    <property type="match status" value="1"/>
</dbReference>
<comment type="function">
    <molecule>Capsid protein</molecule>
    <text evidence="3">Capsid protein interacts with genomic RNA and assembles into icosahedric core particles 65-70 nm in diameter. The resulting nucleocapsid eventually associates with the cytoplasmic domain of E2 at the cell membrane, leading to budding and formation of mature virions from host Golgi membranes. Phosphorylation negatively regulates RNA-binding activity, possibly delaying virion assembly during the viral replication phase. Capsid protein dimerizes and becomes disulfide-linked in the virion. Modulates genomic RNA replication. Modulates subgenomic RNA synthesis by interacting with human C1QBP/SF2P32. Induces both perinuclear clustering of mitochondria and the formation of electron-dense intermitochondrial plaques, both hallmarks of rubella virus infected cells. Induces apoptosis when expressed in transfected cells.</text>
</comment>
<comment type="function">
    <molecule>Spike glycoprotein E2</molecule>
    <text evidence="3">Responsible for viral attachment to target host cell, by binding to the cell receptor. Its transport to the plasma membrane depends on interaction with E1 protein. The surface glycoproteins display an irregular helical organization and a pseudo-tetrameric inner nucleocapsid arrangement.</text>
</comment>
<comment type="function">
    <molecule>Spike glycoprotein E1</molecule>
    <text evidence="2 3">Class II viral fusion protein (By similarity). Fusion activity is inactive as long as E1 is bound to E2 in mature virion. After virus attachment to target cell and clathrin-mediated endocytosis, acidification of the endosome would induce dissociation of E1/E2 heterodimer and concomitant trimerization of the E1 subunits (By similarity). This E1 homotrimer is fusion active, and promotes release of viral nucleocapsid in cytoplasm after endosome and viral membrane fusion. The cytoplasmic tail of spike glycoprotein E1 modulates virus release. The surface glycoproteins display an irregular helical organization and a pseudo-tetrameric inner nucleocapsid arrangement (By similarity).</text>
</comment>
<comment type="subunit">
    <molecule>Capsid protein</molecule>
    <text evidence="3">Homodimer; further assembles into homooligomer. Interacts with human C1QBP. Interacts (via N-terminus) with protease/methyltransferase p150.</text>
</comment>
<comment type="subunit">
    <molecule>Spike glycoprotein E1</molecule>
    <text evidence="3">Heterodimer with spike glycoprotein E2.</text>
</comment>
<comment type="subunit">
    <molecule>Spike glycoprotein E2</molecule>
    <text evidence="3">Heterodimer with spike glycoprotein E1.</text>
</comment>
<comment type="subcellular location">
    <molecule>Capsid protein</molecule>
    <subcellularLocation>
        <location evidence="3">Virion</location>
    </subcellularLocation>
    <subcellularLocation>
        <location>Host cytoplasm</location>
    </subcellularLocation>
    <subcellularLocation>
        <location evidence="3">Host mitochondrion</location>
    </subcellularLocation>
    <text evidence="3">The capsid protein is concentrated around Golgi region (By similarity). In the virion, it is probably associated to the viral membrane (By similarity).</text>
</comment>
<comment type="subcellular location">
    <molecule>Spike glycoprotein E2</molecule>
    <subcellularLocation>
        <location evidence="3">Virion membrane</location>
        <topology evidence="3">Single-pass type I membrane protein</topology>
    </subcellularLocation>
    <subcellularLocation>
        <location evidence="3">Host Golgi apparatus membrane</location>
        <topology evidence="3">Single-pass type I membrane protein</topology>
    </subcellularLocation>
    <text evidence="3">E1 and E2 form heterodimer in the endoplasmic reticulum before they are transported to and retained in the Golgi complex, where virus assembly occurs. E1 possesses an endoplasmic reticulum retention signal, and unassembled E2 and E1 subunits are retained in the endoplasmic reticulum. Presumably, assembly of E2 and E1 would mask the signal, thereby allowing transport of the heterodimer to the Golgi complex.</text>
</comment>
<comment type="subcellular location">
    <molecule>Spike glycoprotein E1</molecule>
    <subcellularLocation>
        <location evidence="3">Virion membrane</location>
        <topology evidence="3">Single-pass type I membrane protein</topology>
    </subcellularLocation>
    <subcellularLocation>
        <location evidence="3">Host Golgi apparatus membrane</location>
        <topology evidence="3">Single-pass type I membrane protein</topology>
    </subcellularLocation>
    <text evidence="3">E1 and E2 form heterodimer in the endoplasmic reticulum before they are transported to and retained in the Golgi complex, where virus assembly occurs. E1 possesses an endoplasmic reticulum retention signal, and unassembled E2 and E1 subunits are retained in the endoplasmic reticulum. Presumably, assembly of E2 and E1 would mask the signal, thereby allowing transport of the heterodimer to the Golgi complex.</text>
</comment>
<comment type="domain">
    <text evidence="3">Structural polyprotein: Contains two internal signal peptides that are necessary for directing translocation of the glycoproteins into the lumen of the endoplasmic reticulum.</text>
</comment>
<comment type="domain">
    <molecule>Capsid protein</molecule>
    <text evidence="3">The capsid protein is probably attached to the viral membrane through the E2 signal peptide. This domain is also required for the localization of the capsid protein to the juxtanuclear region and subsequent virus assembly at the Golgi complex.</text>
</comment>
<comment type="PTM">
    <text evidence="3">Structural polyprotein: Specific enzymatic cleavages in vivo yield mature proteins. Two signal peptidase-mediated cleavages within the polyprotein produce the structural proteins capsid, E2, and E1. The E2 signal peptide remains attached to the C-terminus of the capsid protein after cleavage by the signal peptidase. Another signal peptide at E2 C-terminus directs E1 to the ER, with a similar mechanism.</text>
</comment>
<comment type="PTM">
    <molecule>Spike glycoprotein E1</molecule>
    <text evidence="3">Contains three N-linked oligosaccharides.</text>
</comment>
<comment type="PTM">
    <text evidence="1 3">Capsid is phosphorylated on Ser-46 by host. This phosphorylation negatively regulates capsid protein RNA-binding activity (By similarity). Dephosphorylated by human PP1A (By similarity).</text>
</comment>
<comment type="miscellaneous">
    <text evidence="3">Structural polyprotein: Translated from a subgenomic RNA synthesized during togaviruses replication.</text>
</comment>
<keyword id="KW-0106">Calcium</keyword>
<keyword id="KW-0167">Capsid protein</keyword>
<keyword id="KW-1165">Clathrin-mediated endocytosis of virus by host</keyword>
<keyword id="KW-1015">Disulfide bond</keyword>
<keyword id="KW-1170">Fusion of virus membrane with host endosomal membrane</keyword>
<keyword id="KW-1168">Fusion of virus membrane with host membrane</keyword>
<keyword id="KW-0325">Glycoprotein</keyword>
<keyword id="KW-1035">Host cytoplasm</keyword>
<keyword id="KW-1040">Host Golgi apparatus</keyword>
<keyword id="KW-1043">Host membrane</keyword>
<keyword id="KW-1045">Host mitochondrion</keyword>
<keyword id="KW-0945">Host-virus interaction</keyword>
<keyword id="KW-0449">Lipoprotein</keyword>
<keyword id="KW-0472">Membrane</keyword>
<keyword id="KW-0479">Metal-binding</keyword>
<keyword id="KW-0564">Palmitate</keyword>
<keyword id="KW-0597">Phosphoprotein</keyword>
<keyword id="KW-0694">RNA-binding</keyword>
<keyword id="KW-1144">T=4 icosahedral capsid protein</keyword>
<keyword id="KW-0812">Transmembrane</keyword>
<keyword id="KW-1133">Transmembrane helix</keyword>
<keyword id="KW-1161">Viral attachment to host cell</keyword>
<keyword id="KW-0261">Viral envelope protein</keyword>
<keyword id="KW-1162">Viral penetration into host cytoplasm</keyword>
<keyword id="KW-0946">Virion</keyword>
<keyword id="KW-1164">Virus endocytosis by host</keyword>
<keyword id="KW-1160">Virus entry into host cell</keyword>
<organismHost>
    <name type="scientific">Homo sapiens</name>
    <name type="common">Human</name>
    <dbReference type="NCBI Taxonomy" id="9606"/>
</organismHost>
<sequence>MASTTPITMEDLQKALEAQSRALRAELAAGASQSRRPRPPRQRDSSTSGDDSGRDSGGPRRRRGNRGRGQRKDWSMAPPPPEERQESRSQTPAPKPSRAPPQQPQPPRMQTGRGGSAPRPELGPPTNPFQAAVARGLRPPLHDPDTEAPTEACVTSWLWSEGEGAVFYRVDLHFTNLGTPPLDEDGRWDPALMYNPCGPEPPAHVVRAYNQPAGDVRGVWGKGERTYTEQDFRVGGTRWHRLLRMPVRGLDGDSAPLPPHTTERIETRSARHPWRIRFGAPQAFLAGLLLAAVAVGTARAGLQPRADMAAPPAPPQPPCAHGQHYGHHHHQLPFLGHDGHHGGTLRVGQHHRNASDVLPGHCLQGGWGCYNLSDWHQGTHVCHTKHMDFWCVEHDRPPPATPTPLTTAANSTTAATPATAPAPCHAGLNDSCGGFLSGCGPMRLRHGADTRCGRLICGLSTTAQYPPTRFACAMRWGLPPWELVVLTARPEDGWTCRGVPAHPGTRCPELVSPMGRATCSPASALWLATANALSLDHALAAFVLLFPWVLIFMVCRRACRRRGAAAALTAVVLQGYNPPAYGEEAFTYLCTAPGCATQTPVPVRLAGVRFESKIVDGGCFAPWDLEATGACICEIPTDVSCEGLGAWVPTAPCARIWNGTQRACTFWAVNAYSSGGYAQLASYFNPGGSYYKQYHPTACEVEPAFGHSDAACWGFPTDTVMSVFALASYVQHPHKTVRVKFHTETRTVWQLSVAGVSCNVTTEHPFCNTPHGQLEVQVPPDPGDLVEYIMNYTGNQQSRWGLGSPNCHGPDWASPVCQRHSPDCSRLVGATPERPRLRLVDADDPLLRTAPGPGEVWVTPVIGSQARKCGLHIRAGPYGHATVEMPEWIHAHTTSDPWHPPGPLGLKFKTVRPVALPRALAPPRNVRVTGCYQCGTPALVEGLAPGGGNCHLTVNGEDVGAVPPGKFVTAALLNTPPPYQVSCGGESDRASARVIDPAAQSFTGVVYGTHTTAVSETRQTWAEWAAAHWWQLTLGAVCALLLAGLLACCAKCLYYLRGAIAPR</sequence>
<name>POLS_RUBVN</name>